<dbReference type="EMBL" id="M21150">
    <property type="protein sequence ID" value="AAA85299.1"/>
    <property type="molecule type" value="Genomic_DNA"/>
</dbReference>
<dbReference type="EMBL" id="X55034">
    <property type="protein sequence ID" value="CAA38853.1"/>
    <property type="status" value="ALT_INIT"/>
    <property type="molecule type" value="Genomic_DNA"/>
</dbReference>
<dbReference type="EMBL" id="U00096">
    <property type="protein sequence ID" value="AAC73187.2"/>
    <property type="molecule type" value="Genomic_DNA"/>
</dbReference>
<dbReference type="EMBL" id="AP009048">
    <property type="protein sequence ID" value="BAB96645.2"/>
    <property type="molecule type" value="Genomic_DNA"/>
</dbReference>
<dbReference type="EMBL" id="M12891">
    <property type="protein sequence ID" value="AAA83880.1"/>
    <property type="status" value="ALT_INIT"/>
    <property type="molecule type" value="Genomic_DNA"/>
</dbReference>
<dbReference type="PIR" id="D64729">
    <property type="entry name" value="D64729"/>
</dbReference>
<dbReference type="RefSeq" id="NP_414618.4">
    <property type="nucleotide sequence ID" value="NC_000913.3"/>
</dbReference>
<dbReference type="RefSeq" id="WP_001115472.1">
    <property type="nucleotide sequence ID" value="NZ_STEB01000010.1"/>
</dbReference>
<dbReference type="PDB" id="6GZ0">
    <property type="method" value="X-ray"/>
    <property type="resolution" value="1.52 A"/>
    <property type="chains" value="A=109-314"/>
</dbReference>
<dbReference type="PDB" id="6GZ1">
    <property type="method" value="X-ray"/>
    <property type="resolution" value="1.74 A"/>
    <property type="chains" value="A=109-314"/>
</dbReference>
<dbReference type="PDB" id="6GZ2">
    <property type="method" value="X-ray"/>
    <property type="resolution" value="1.94 A"/>
    <property type="chains" value="A=109-314"/>
</dbReference>
<dbReference type="PDBsum" id="6GZ0"/>
<dbReference type="PDBsum" id="6GZ1"/>
<dbReference type="PDBsum" id="6GZ2"/>
<dbReference type="SMR" id="P10151"/>
<dbReference type="BioGRID" id="4259484">
    <property type="interactions" value="101"/>
</dbReference>
<dbReference type="BioGRID" id="853278">
    <property type="interactions" value="3"/>
</dbReference>
<dbReference type="FunCoup" id="P10151">
    <property type="interactions" value="150"/>
</dbReference>
<dbReference type="IntAct" id="P10151">
    <property type="interactions" value="5"/>
</dbReference>
<dbReference type="STRING" id="511145.b0076"/>
<dbReference type="PaxDb" id="511145-b0076"/>
<dbReference type="EnsemblBacteria" id="AAC73187">
    <property type="protein sequence ID" value="AAC73187"/>
    <property type="gene ID" value="b0076"/>
</dbReference>
<dbReference type="GeneID" id="949034"/>
<dbReference type="KEGG" id="ecj:JW0075"/>
<dbReference type="KEGG" id="eco:b0076"/>
<dbReference type="PATRIC" id="fig|1411691.4.peg.2205"/>
<dbReference type="EchoBASE" id="EB0526"/>
<dbReference type="eggNOG" id="COG0583">
    <property type="taxonomic scope" value="Bacteria"/>
</dbReference>
<dbReference type="HOGENOM" id="CLU_039613_39_0_6"/>
<dbReference type="InParanoid" id="P10151"/>
<dbReference type="OMA" id="PTARAYQ"/>
<dbReference type="OrthoDB" id="8720143at2"/>
<dbReference type="PhylomeDB" id="P10151"/>
<dbReference type="BioCyc" id="EcoCyc:PD00519"/>
<dbReference type="PRO" id="PR:P10151"/>
<dbReference type="Proteomes" id="UP000000625">
    <property type="component" value="Chromosome"/>
</dbReference>
<dbReference type="GO" id="GO:0032993">
    <property type="term" value="C:protein-DNA complex"/>
    <property type="evidence" value="ECO:0000353"/>
    <property type="project" value="CollecTF"/>
</dbReference>
<dbReference type="GO" id="GO:0003700">
    <property type="term" value="F:DNA-binding transcription factor activity"/>
    <property type="evidence" value="ECO:0007669"/>
    <property type="project" value="InterPro"/>
</dbReference>
<dbReference type="GO" id="GO:0043565">
    <property type="term" value="F:sequence-specific DNA binding"/>
    <property type="evidence" value="ECO:0000353"/>
    <property type="project" value="CollecTF"/>
</dbReference>
<dbReference type="GO" id="GO:0006355">
    <property type="term" value="P:regulation of DNA-templated transcription"/>
    <property type="evidence" value="ECO:0000315"/>
    <property type="project" value="EcoCyc"/>
</dbReference>
<dbReference type="CDD" id="cd08466">
    <property type="entry name" value="PBP2_LeuO"/>
    <property type="match status" value="1"/>
</dbReference>
<dbReference type="FunFam" id="1.10.10.10:FF:000188">
    <property type="entry name" value="HTH-type transcriptional regulator LeuO"/>
    <property type="match status" value="1"/>
</dbReference>
<dbReference type="FunFam" id="3.40.190.10:FF:000081">
    <property type="entry name" value="HTH-type transcriptional regulator LeuO"/>
    <property type="match status" value="1"/>
</dbReference>
<dbReference type="Gene3D" id="3.40.190.10">
    <property type="entry name" value="Periplasmic binding protein-like II"/>
    <property type="match status" value="2"/>
</dbReference>
<dbReference type="Gene3D" id="1.10.10.10">
    <property type="entry name" value="Winged helix-like DNA-binding domain superfamily/Winged helix DNA-binding domain"/>
    <property type="match status" value="1"/>
</dbReference>
<dbReference type="InterPro" id="IPR050389">
    <property type="entry name" value="LysR-type_TF"/>
</dbReference>
<dbReference type="InterPro" id="IPR005119">
    <property type="entry name" value="LysR_subst-bd"/>
</dbReference>
<dbReference type="InterPro" id="IPR000847">
    <property type="entry name" value="Tscrpt_reg_HTH_LysR"/>
</dbReference>
<dbReference type="InterPro" id="IPR036388">
    <property type="entry name" value="WH-like_DNA-bd_sf"/>
</dbReference>
<dbReference type="InterPro" id="IPR036390">
    <property type="entry name" value="WH_DNA-bd_sf"/>
</dbReference>
<dbReference type="NCBIfam" id="NF007063">
    <property type="entry name" value="PRK09508.1"/>
    <property type="match status" value="1"/>
</dbReference>
<dbReference type="PANTHER" id="PTHR30118:SF6">
    <property type="entry name" value="HTH-TYPE TRANSCRIPTIONAL REGULATOR LEUO"/>
    <property type="match status" value="1"/>
</dbReference>
<dbReference type="PANTHER" id="PTHR30118">
    <property type="entry name" value="HTH-TYPE TRANSCRIPTIONAL REGULATOR LEUO-RELATED"/>
    <property type="match status" value="1"/>
</dbReference>
<dbReference type="Pfam" id="PF00126">
    <property type="entry name" value="HTH_1"/>
    <property type="match status" value="1"/>
</dbReference>
<dbReference type="Pfam" id="PF03466">
    <property type="entry name" value="LysR_substrate"/>
    <property type="match status" value="1"/>
</dbReference>
<dbReference type="PRINTS" id="PR00039">
    <property type="entry name" value="HTHLYSR"/>
</dbReference>
<dbReference type="SUPFAM" id="SSF53850">
    <property type="entry name" value="Periplasmic binding protein-like II"/>
    <property type="match status" value="1"/>
</dbReference>
<dbReference type="SUPFAM" id="SSF46785">
    <property type="entry name" value="Winged helix' DNA-binding domain"/>
    <property type="match status" value="1"/>
</dbReference>
<dbReference type="PROSITE" id="PS50931">
    <property type="entry name" value="HTH_LYSR"/>
    <property type="match status" value="1"/>
</dbReference>
<gene>
    <name type="primary">leuO</name>
    <name type="ordered locus">b0076</name>
    <name type="ordered locus">JW0075</name>
</gene>
<feature type="chain" id="PRO_0000105660" description="HTH-type transcriptional regulator LeuO">
    <location>
        <begin position="1"/>
        <end position="314"/>
    </location>
</feature>
<feature type="domain" description="HTH lysR-type" evidence="1">
    <location>
        <begin position="22"/>
        <end position="79"/>
    </location>
</feature>
<feature type="DNA-binding region" description="H-T-H motif" evidence="1">
    <location>
        <begin position="39"/>
        <end position="58"/>
    </location>
</feature>
<feature type="sequence conflict" description="In Ref. 1; AAA85299 and 2; CAA38853." evidence="6" ref="1 2">
    <location>
        <begin position="291"/>
        <end position="314"/>
    </location>
</feature>
<feature type="strand" evidence="7">
    <location>
        <begin position="113"/>
        <end position="118"/>
    </location>
</feature>
<feature type="helix" evidence="7">
    <location>
        <begin position="122"/>
        <end position="124"/>
    </location>
</feature>
<feature type="helix" evidence="7">
    <location>
        <begin position="126"/>
        <end position="137"/>
    </location>
</feature>
<feature type="strand" evidence="7">
    <location>
        <begin position="141"/>
        <end position="148"/>
    </location>
</feature>
<feature type="helix" evidence="9">
    <location>
        <begin position="153"/>
        <end position="159"/>
    </location>
</feature>
<feature type="helix" evidence="7">
    <location>
        <begin position="160"/>
        <end position="162"/>
    </location>
</feature>
<feature type="strand" evidence="7">
    <location>
        <begin position="163"/>
        <end position="169"/>
    </location>
</feature>
<feature type="strand" evidence="7">
    <location>
        <begin position="179"/>
        <end position="191"/>
    </location>
</feature>
<feature type="helix" evidence="7">
    <location>
        <begin position="203"/>
        <end position="208"/>
    </location>
</feature>
<feature type="strand" evidence="7">
    <location>
        <begin position="211"/>
        <end position="214"/>
    </location>
</feature>
<feature type="strand" evidence="8">
    <location>
        <begin position="216"/>
        <end position="218"/>
    </location>
</feature>
<feature type="helix" evidence="7">
    <location>
        <begin position="224"/>
        <end position="226"/>
    </location>
</feature>
<feature type="helix" evidence="7">
    <location>
        <begin position="230"/>
        <end position="233"/>
    </location>
</feature>
<feature type="strand" evidence="7">
    <location>
        <begin position="236"/>
        <end position="242"/>
    </location>
</feature>
<feature type="helix" evidence="7">
    <location>
        <begin position="243"/>
        <end position="252"/>
    </location>
</feature>
<feature type="strand" evidence="7">
    <location>
        <begin position="256"/>
        <end position="260"/>
    </location>
</feature>
<feature type="helix" evidence="7">
    <location>
        <begin position="261"/>
        <end position="271"/>
    </location>
</feature>
<feature type="strand" evidence="7">
    <location>
        <begin position="273"/>
        <end position="277"/>
    </location>
</feature>
<feature type="strand" evidence="7">
    <location>
        <begin position="284"/>
        <end position="291"/>
    </location>
</feature>
<feature type="helix" evidence="8">
    <location>
        <begin position="293"/>
        <end position="296"/>
    </location>
</feature>
<feature type="helix" evidence="7">
    <location>
        <begin position="299"/>
        <end position="313"/>
    </location>
</feature>
<proteinExistence type="evidence at protein level"/>
<sequence length="314" mass="35695">MPEVQTDHPETAELSKPQLRMVDLNLLTVFDAVMQEQNITRAAHVLGMSQPAVSNAVARLKVMFNDELFVRYGRGIQPTARAFQLFGSVRQALQLVQNELPGSGFEPASSERVFHLCVCSPLDSILTSQIYNHIEQIAPNIHVMFKSSLNQNTEHQLRYQETEFVISYEDFHRPEFTSVPLFKDEMVLVASKNHPTIKGPLLKHDVYNEQHAAVSLDRFASFSQPWYDTVDKQASIAYQGMAMMSVLSVVSQTHLVAIAPRWLAEEFAESLELQVLPLPLKQNSRTCYLSWHEAAGRDKGHQWMEEQLVSICKR</sequence>
<organism>
    <name type="scientific">Escherichia coli (strain K12)</name>
    <dbReference type="NCBI Taxonomy" id="83333"/>
    <lineage>
        <taxon>Bacteria</taxon>
        <taxon>Pseudomonadati</taxon>
        <taxon>Pseudomonadota</taxon>
        <taxon>Gammaproteobacteria</taxon>
        <taxon>Enterobacterales</taxon>
        <taxon>Enterobacteriaceae</taxon>
        <taxon>Escherichia</taxon>
    </lineage>
</organism>
<evidence type="ECO:0000255" key="1">
    <source>
        <dbReference type="PROSITE-ProRule" id="PRU00253"/>
    </source>
</evidence>
<evidence type="ECO:0000269" key="2">
    <source>
    </source>
</evidence>
<evidence type="ECO:0000269" key="3">
    <source>
    </source>
</evidence>
<evidence type="ECO:0000269" key="4">
    <source>
    </source>
</evidence>
<evidence type="ECO:0000269" key="5">
    <source>
    </source>
</evidence>
<evidence type="ECO:0000305" key="6"/>
<evidence type="ECO:0007829" key="7">
    <source>
        <dbReference type="PDB" id="6GZ0"/>
    </source>
</evidence>
<evidence type="ECO:0007829" key="8">
    <source>
        <dbReference type="PDB" id="6GZ1"/>
    </source>
</evidence>
<evidence type="ECO:0007829" key="9">
    <source>
        <dbReference type="PDB" id="6GZ2"/>
    </source>
</evidence>
<comment type="function">
    <text evidence="2 3 4 5">A global transcription factor. Activates transcription of the 9 following operons; yjjQ-bglJ, yjjP, acrEF, ybdO, yjcRQP, casABCDE12, rhsD-ybbC, fepE and gltF, in most cases it probably interferes with silencing by H-NS and activates transcription. Represses transcription of the 3 following operons; uxaCA, sdaCB and btsT. H-NS repression of the bgl operon, leading to the ability to metabolize some beta-glucosides. It also directly activates the bgl operon. Activation is H-NS and BglJ-RcsB independent.</text>
</comment>
<comment type="induction">
    <text evidence="2">Gene expression is repressed by H-NS, activated by itself. More highly expressed in minimal than rich medium, poorly expressed in exoponential growth, levels increase in stationary phase (at protein level).</text>
</comment>
<comment type="disruption phenotype">
    <text evidence="5">Has no effect on leucine biosynthesis nor on bgl operon silencing.</text>
</comment>
<comment type="similarity">
    <text evidence="6">Belongs to the LysR transcriptional regulatory family.</text>
</comment>
<comment type="sequence caution" evidence="6">
    <conflict type="erroneous initiation">
        <sequence resource="EMBL-CDS" id="AAA83880"/>
    </conflict>
    <text>Extended N-terminus.</text>
</comment>
<comment type="sequence caution" evidence="6">
    <conflict type="erroneous initiation">
        <sequence resource="EMBL-CDS" id="CAA38853"/>
    </conflict>
    <text>Extended N-terminus.</text>
</comment>
<name>LEUO_ECOLI</name>
<reference key="1">
    <citation type="journal article" date="1988" name="Proc. Natl. Acad. Sci. U.S.A.">
        <title>A large family of bacterial activator proteins.</title>
        <authorList>
            <person name="Henikoff S."/>
            <person name="Haughn G.W."/>
            <person name="Calvo J.M."/>
            <person name="Wallace J.C."/>
        </authorList>
    </citation>
    <scope>NUCLEOTIDE SEQUENCE [GENOMIC DNA]</scope>
</reference>
<reference key="2">
    <citation type="journal article" date="1992" name="Nucleic Acids Res.">
        <title>Systematic sequencing of the Escherichia coli genome: analysis of the 0-2.4 min region.</title>
        <authorList>
            <person name="Yura T."/>
            <person name="Mori H."/>
            <person name="Nagai H."/>
            <person name="Nagata T."/>
            <person name="Ishihama A."/>
            <person name="Fujita N."/>
            <person name="Isono K."/>
            <person name="Mizobuchi K."/>
            <person name="Nakata A."/>
        </authorList>
    </citation>
    <scope>NUCLEOTIDE SEQUENCE [LARGE SCALE GENOMIC DNA]</scope>
    <source>
        <strain>K12</strain>
    </source>
</reference>
<reference key="3">
    <citation type="journal article" date="1997" name="Science">
        <title>The complete genome sequence of Escherichia coli K-12.</title>
        <authorList>
            <person name="Blattner F.R."/>
            <person name="Plunkett G. III"/>
            <person name="Bloch C.A."/>
            <person name="Perna N.T."/>
            <person name="Burland V."/>
            <person name="Riley M."/>
            <person name="Collado-Vides J."/>
            <person name="Glasner J.D."/>
            <person name="Rode C.K."/>
            <person name="Mayhew G.F."/>
            <person name="Gregor J."/>
            <person name="Davis N.W."/>
            <person name="Kirkpatrick H.A."/>
            <person name="Goeden M.A."/>
            <person name="Rose D.J."/>
            <person name="Mau B."/>
            <person name="Shao Y."/>
        </authorList>
    </citation>
    <scope>NUCLEOTIDE SEQUENCE [LARGE SCALE GENOMIC DNA]</scope>
    <source>
        <strain>K12 / MG1655 / ATCC 47076</strain>
    </source>
</reference>
<reference key="4">
    <citation type="journal article" date="2006" name="Mol. Syst. Biol.">
        <title>Highly accurate genome sequences of Escherichia coli K-12 strains MG1655 and W3110.</title>
        <authorList>
            <person name="Hayashi K."/>
            <person name="Morooka N."/>
            <person name="Yamamoto Y."/>
            <person name="Fujita K."/>
            <person name="Isono K."/>
            <person name="Choi S."/>
            <person name="Ohtsubo E."/>
            <person name="Baba T."/>
            <person name="Wanner B.L."/>
            <person name="Mori H."/>
            <person name="Horiuchi T."/>
        </authorList>
    </citation>
    <scope>NUCLEOTIDE SEQUENCE [LARGE SCALE GENOMIC DNA]</scope>
    <scope>SEQUENCE REVISION TO 291-314</scope>
    <source>
        <strain>K12 / W3110 / ATCC 27325 / DSM 5911</strain>
    </source>
</reference>
<reference key="5">
    <citation type="journal article" date="1986" name="J. Bacteriol.">
        <title>High A + T content conserved in DNA sequences upstream of leuABCD in Escherichia coli and Salmonella typhimurium.</title>
        <authorList>
            <person name="Haughn G.W."/>
            <person name="Wessler S.R."/>
            <person name="Gemmill R.M."/>
            <person name="Calvo J.M."/>
        </authorList>
    </citation>
    <scope>NUCLEOTIDE SEQUENCE [GENOMIC DNA] OF 1-74</scope>
    <source>
        <strain>K12</strain>
    </source>
</reference>
<reference key="6">
    <citation type="journal article" date="1997" name="Electrophoresis">
        <title>Escherichia coli proteome analysis using the gene-protein database.</title>
        <authorList>
            <person name="VanBogelen R.A."/>
            <person name="Abshire K.Z."/>
            <person name="Moldover B."/>
            <person name="Olson E.R."/>
            <person name="Neidhardt F.C."/>
        </authorList>
    </citation>
    <scope>IDENTIFICATION BY 2D-GEL</scope>
</reference>
<reference key="7">
    <citation type="journal article" date="1998" name="J. Bacteriol.">
        <title>The leuO gene product has a latent ability to relieve bgl silencing in Escherichia coli.</title>
        <authorList>
            <person name="Ueguchi C."/>
            <person name="Ohta T."/>
            <person name="Seto C."/>
            <person name="Suzuki T."/>
            <person name="Mizuno T."/>
        </authorList>
    </citation>
    <scope>ROLE AS A TRANSCRIPTIONAL REGULATOR</scope>
    <scope>DISRUPTION PHENOTYPE</scope>
    <source>
        <strain>K12 / CSH26</strain>
    </source>
</reference>
<reference key="8">
    <citation type="journal article" date="2008" name="J. Bacteriol.">
        <title>Regulation of the yjjQ-bglJ operon, encoding LuxR-type transcription factors, and the divergent yjjP gene by H-NS and LeuO.</title>
        <authorList>
            <person name="Stratmann T."/>
            <person name="Madhusudan S."/>
            <person name="Schnetz K."/>
        </authorList>
    </citation>
    <scope>DNA-BINDING</scope>
    <source>
        <strain>CSH50</strain>
    </source>
</reference>
<reference key="9">
    <citation type="journal article" date="2009" name="J. Bacteriol.">
        <title>Involvement of the leucine response transcription factor LeuO in regulation of the genes for sulfa drug efflux.</title>
        <authorList>
            <person name="Shimada T."/>
            <person name="Yamamoto K."/>
            <person name="Ishihama A."/>
        </authorList>
    </citation>
    <scope>FUNCTION AS A TRANSCRIPTIONAL ACTIVATOR</scope>
    <scope>FUNCTION AS A TRANSCRIPTIONAL REPRESSOR</scope>
    <scope>DNA-BINDING</scope>
    <scope>INDUCTION</scope>
    <source>
        <strain>K12 / BW25113</strain>
    </source>
</reference>
<reference key="10">
    <citation type="journal article" date="2010" name="J. Bacteriol.">
        <title>BglJ-RcsB heterodimers relieve repression of the Escherichia coli bgl operon by H-NS.</title>
        <authorList>
            <person name="Venkatesh G.R."/>
            <person name="Kembou Koungni F.C."/>
            <person name="Paukner A."/>
            <person name="Stratmann T."/>
            <person name="Blissenbach B."/>
            <person name="Schnetz K."/>
        </authorList>
    </citation>
    <scope>ROLE AS A TRANSCRIPTIONAL REGULATOR</scope>
    <scope>DNA-BINDING</scope>
    <scope>INDEPENDENCE OF BGLJ-RCSB</scope>
</reference>
<reference key="11">
    <citation type="journal article" date="2010" name="Mol. Microbiol.">
        <title>H-NS-mediated repression of CRISPR-based immunity in Escherichia coli K12 can be relieved by the transcription activator LeuO.</title>
        <authorList>
            <person name="Westra E.R."/>
            <person name="Pul U."/>
            <person name="Heidrich N."/>
            <person name="Jore M.M."/>
            <person name="Lundgren M."/>
            <person name="Stratmann T."/>
            <person name="Wurm R."/>
            <person name="Raine A."/>
            <person name="Mescher M."/>
            <person name="Van Heereveld L."/>
            <person name="Mastop M."/>
            <person name="Wagner E.G."/>
            <person name="Schnetz K."/>
            <person name="Van Der Oost J."/>
            <person name="Wagner R."/>
            <person name="Brouns S.J."/>
        </authorList>
    </citation>
    <scope>ANTAGONIZES H-NS</scope>
    <scope>ROLE IN CRISPR EXPRESSION</scope>
    <source>
        <strain>K12</strain>
    </source>
</reference>
<protein>
    <recommendedName>
        <fullName>HTH-type transcriptional regulator LeuO</fullName>
    </recommendedName>
</protein>
<keyword id="KW-0002">3D-structure</keyword>
<keyword id="KW-0010">Activator</keyword>
<keyword id="KW-0238">DNA-binding</keyword>
<keyword id="KW-1185">Reference proteome</keyword>
<keyword id="KW-0678">Repressor</keyword>
<keyword id="KW-0804">Transcription</keyword>
<keyword id="KW-0805">Transcription regulation</keyword>
<accession>P10151</accession>
<accession>P75640</accession>